<feature type="chain" id="PRO_0000248819" description="Proline--tRNA ligase">
    <location>
        <begin position="1"/>
        <end position="564"/>
    </location>
</feature>
<comment type="function">
    <text evidence="1">Catalyzes the attachment of proline to tRNA(Pro) in a two-step reaction: proline is first activated by ATP to form Pro-AMP and then transferred to the acceptor end of tRNA(Pro). As ProRS can inadvertently accommodate and process non-cognate amino acids such as alanine and cysteine, to avoid such errors it has two additional distinct editing activities against alanine. One activity is designated as 'pretransfer' editing and involves the tRNA(Pro)-independent hydrolysis of activated Ala-AMP. The other activity is designated 'posttransfer' editing and involves deacylation of mischarged Ala-tRNA(Pro). The misacylated Cys-tRNA(Pro) is not edited by ProRS.</text>
</comment>
<comment type="catalytic activity">
    <reaction evidence="1">
        <text>tRNA(Pro) + L-proline + ATP = L-prolyl-tRNA(Pro) + AMP + diphosphate</text>
        <dbReference type="Rhea" id="RHEA:14305"/>
        <dbReference type="Rhea" id="RHEA-COMP:9700"/>
        <dbReference type="Rhea" id="RHEA-COMP:9702"/>
        <dbReference type="ChEBI" id="CHEBI:30616"/>
        <dbReference type="ChEBI" id="CHEBI:33019"/>
        <dbReference type="ChEBI" id="CHEBI:60039"/>
        <dbReference type="ChEBI" id="CHEBI:78442"/>
        <dbReference type="ChEBI" id="CHEBI:78532"/>
        <dbReference type="ChEBI" id="CHEBI:456215"/>
        <dbReference type="EC" id="6.1.1.15"/>
    </reaction>
</comment>
<comment type="subunit">
    <text evidence="1">Homodimer.</text>
</comment>
<comment type="subcellular location">
    <subcellularLocation>
        <location evidence="1">Cytoplasm</location>
    </subcellularLocation>
</comment>
<comment type="domain">
    <text evidence="1">Consists of three domains: the N-terminal catalytic domain, the editing domain and the C-terminal anticodon-binding domain.</text>
</comment>
<comment type="similarity">
    <text evidence="1">Belongs to the class-II aminoacyl-tRNA synthetase family. ProS type 1 subfamily.</text>
</comment>
<comment type="sequence caution" evidence="2">
    <conflict type="erroneous initiation">
        <sequence resource="EMBL-CDS" id="AAW74063"/>
    </conflict>
</comment>
<keyword id="KW-0030">Aminoacyl-tRNA synthetase</keyword>
<keyword id="KW-0067">ATP-binding</keyword>
<keyword id="KW-0963">Cytoplasm</keyword>
<keyword id="KW-0436">Ligase</keyword>
<keyword id="KW-0547">Nucleotide-binding</keyword>
<keyword id="KW-0648">Protein biosynthesis</keyword>
<keyword id="KW-1185">Reference proteome</keyword>
<accession>Q5H4Q7</accession>
<organism>
    <name type="scientific">Xanthomonas oryzae pv. oryzae (strain KACC10331 / KXO85)</name>
    <dbReference type="NCBI Taxonomy" id="291331"/>
    <lineage>
        <taxon>Bacteria</taxon>
        <taxon>Pseudomonadati</taxon>
        <taxon>Pseudomonadota</taxon>
        <taxon>Gammaproteobacteria</taxon>
        <taxon>Lysobacterales</taxon>
        <taxon>Lysobacteraceae</taxon>
        <taxon>Xanthomonas</taxon>
    </lineage>
</organism>
<reference key="1">
    <citation type="journal article" date="2005" name="Nucleic Acids Res.">
        <title>The genome sequence of Xanthomonas oryzae pathovar oryzae KACC10331, the bacterial blight pathogen of rice.</title>
        <authorList>
            <person name="Lee B.-M."/>
            <person name="Park Y.-J."/>
            <person name="Park D.-S."/>
            <person name="Kang H.-W."/>
            <person name="Kim J.-G."/>
            <person name="Song E.-S."/>
            <person name="Park I.-C."/>
            <person name="Yoon U.-H."/>
            <person name="Hahn J.-H."/>
            <person name="Koo B.-S."/>
            <person name="Lee G.-B."/>
            <person name="Kim H."/>
            <person name="Park H.-S."/>
            <person name="Yoon K.-O."/>
            <person name="Kim J.-H."/>
            <person name="Jung C.-H."/>
            <person name="Koh N.-H."/>
            <person name="Seo J.-S."/>
            <person name="Go S.-J."/>
        </authorList>
    </citation>
    <scope>NUCLEOTIDE SEQUENCE [LARGE SCALE GENOMIC DNA]</scope>
    <source>
        <strain>KACC10331 / KXO85</strain>
    </source>
</reference>
<protein>
    <recommendedName>
        <fullName evidence="1">Proline--tRNA ligase</fullName>
        <ecNumber evidence="1">6.1.1.15</ecNumber>
    </recommendedName>
    <alternativeName>
        <fullName evidence="1">Prolyl-tRNA synthetase</fullName>
        <shortName evidence="1">ProRS</shortName>
    </alternativeName>
</protein>
<gene>
    <name evidence="1" type="primary">proS</name>
    <name type="ordered locus">XOO0809</name>
</gene>
<evidence type="ECO:0000255" key="1">
    <source>
        <dbReference type="HAMAP-Rule" id="MF_01569"/>
    </source>
</evidence>
<evidence type="ECO:0000305" key="2"/>
<name>SYP_XANOR</name>
<proteinExistence type="inferred from homology"/>
<sequence length="564" mass="61267">MRLSQFHLHTTKETPADAELVSHRLMLRAGMIRKLASGLYTWSPLGLRVLRKVEAIVREEMDRAGAVEVLFPTIQPRELWDATGRWEKFGGQLLKIKDRKEQEFCYSPTAEEAAAEFARQEINSYKQLPLNFYQIQTKFRDEIRPRFGVMRAREFLMKDAYSFHLTDADMAREYDNMRAAYTRIFTRLGLDFRAVQADSGAIGGDASQEFHVIADSGEDSLAFSTGSDYAANVETASAALPAPRAAASEAMQQVATPTQKTCEDVAQLLGIALQRTVKSVAVMTEAGFVLALVRGDHAVNEIKLAKVPGLAGYRLANETEIRAHLGCEPGFLGPVNTARPVRVVADRDVAALADFVVGANVSGAHLVGVNWGRDLPEPETVADVRNVVEGERAADGGELRLARGIEVGHVFQLGSQYAQALQATVIDEGGKVAVMKMGCYGIGISRIVAAAIEQNHDDAGIIWPAPMAPWQVVVCVINPKQDAQVVSAAQALLDELIAAGLDAALDDRGLRPGAMFADMELLGIPHRVVVSERGLAAGTFEYRARTAAAAENLDKAGLFSRLGR</sequence>
<dbReference type="EC" id="6.1.1.15" evidence="1"/>
<dbReference type="EMBL" id="AE013598">
    <property type="protein sequence ID" value="AAW74063.1"/>
    <property type="status" value="ALT_INIT"/>
    <property type="molecule type" value="Genomic_DNA"/>
</dbReference>
<dbReference type="SMR" id="Q5H4Q7"/>
<dbReference type="STRING" id="291331.XOO0809"/>
<dbReference type="KEGG" id="xoo:XOO0809"/>
<dbReference type="HOGENOM" id="CLU_016739_0_0_6"/>
<dbReference type="Proteomes" id="UP000006735">
    <property type="component" value="Chromosome"/>
</dbReference>
<dbReference type="GO" id="GO:0005829">
    <property type="term" value="C:cytosol"/>
    <property type="evidence" value="ECO:0007669"/>
    <property type="project" value="TreeGrafter"/>
</dbReference>
<dbReference type="GO" id="GO:0002161">
    <property type="term" value="F:aminoacyl-tRNA deacylase activity"/>
    <property type="evidence" value="ECO:0007669"/>
    <property type="project" value="InterPro"/>
</dbReference>
<dbReference type="GO" id="GO:0005524">
    <property type="term" value="F:ATP binding"/>
    <property type="evidence" value="ECO:0007669"/>
    <property type="project" value="UniProtKB-UniRule"/>
</dbReference>
<dbReference type="GO" id="GO:0004827">
    <property type="term" value="F:proline-tRNA ligase activity"/>
    <property type="evidence" value="ECO:0007669"/>
    <property type="project" value="UniProtKB-UniRule"/>
</dbReference>
<dbReference type="GO" id="GO:0006433">
    <property type="term" value="P:prolyl-tRNA aminoacylation"/>
    <property type="evidence" value="ECO:0007669"/>
    <property type="project" value="UniProtKB-UniRule"/>
</dbReference>
<dbReference type="CDD" id="cd04334">
    <property type="entry name" value="ProRS-INS"/>
    <property type="match status" value="1"/>
</dbReference>
<dbReference type="CDD" id="cd00861">
    <property type="entry name" value="ProRS_anticodon_short"/>
    <property type="match status" value="1"/>
</dbReference>
<dbReference type="CDD" id="cd00779">
    <property type="entry name" value="ProRS_core_prok"/>
    <property type="match status" value="1"/>
</dbReference>
<dbReference type="FunFam" id="3.30.930.10:FF:000012">
    <property type="entry name" value="Proline--tRNA ligase"/>
    <property type="match status" value="1"/>
</dbReference>
<dbReference type="Gene3D" id="3.40.50.800">
    <property type="entry name" value="Anticodon-binding domain"/>
    <property type="match status" value="1"/>
</dbReference>
<dbReference type="Gene3D" id="3.30.930.10">
    <property type="entry name" value="Bira Bifunctional Protein, Domain 2"/>
    <property type="match status" value="2"/>
</dbReference>
<dbReference type="Gene3D" id="3.90.960.10">
    <property type="entry name" value="YbaK/aminoacyl-tRNA synthetase-associated domain"/>
    <property type="match status" value="1"/>
</dbReference>
<dbReference type="HAMAP" id="MF_01569">
    <property type="entry name" value="Pro_tRNA_synth_type1"/>
    <property type="match status" value="1"/>
</dbReference>
<dbReference type="InterPro" id="IPR002314">
    <property type="entry name" value="aa-tRNA-synt_IIb"/>
</dbReference>
<dbReference type="InterPro" id="IPR006195">
    <property type="entry name" value="aa-tRNA-synth_II"/>
</dbReference>
<dbReference type="InterPro" id="IPR045864">
    <property type="entry name" value="aa-tRNA-synth_II/BPL/LPL"/>
</dbReference>
<dbReference type="InterPro" id="IPR004154">
    <property type="entry name" value="Anticodon-bd"/>
</dbReference>
<dbReference type="InterPro" id="IPR036621">
    <property type="entry name" value="Anticodon-bd_dom_sf"/>
</dbReference>
<dbReference type="InterPro" id="IPR002316">
    <property type="entry name" value="Pro-tRNA-ligase_IIa"/>
</dbReference>
<dbReference type="InterPro" id="IPR004500">
    <property type="entry name" value="Pro-tRNA-synth_IIa_bac-type"/>
</dbReference>
<dbReference type="InterPro" id="IPR023717">
    <property type="entry name" value="Pro-tRNA-Synthase_IIa_type1"/>
</dbReference>
<dbReference type="InterPro" id="IPR050062">
    <property type="entry name" value="Pro-tRNA_synthetase"/>
</dbReference>
<dbReference type="InterPro" id="IPR044140">
    <property type="entry name" value="ProRS_anticodon_short"/>
</dbReference>
<dbReference type="InterPro" id="IPR033730">
    <property type="entry name" value="ProRS_core_prok"/>
</dbReference>
<dbReference type="InterPro" id="IPR036754">
    <property type="entry name" value="YbaK/aa-tRNA-synt-asso_dom_sf"/>
</dbReference>
<dbReference type="InterPro" id="IPR007214">
    <property type="entry name" value="YbaK/aa-tRNA-synth-assoc-dom"/>
</dbReference>
<dbReference type="NCBIfam" id="NF006625">
    <property type="entry name" value="PRK09194.1"/>
    <property type="match status" value="1"/>
</dbReference>
<dbReference type="NCBIfam" id="TIGR00409">
    <property type="entry name" value="proS_fam_II"/>
    <property type="match status" value="1"/>
</dbReference>
<dbReference type="PANTHER" id="PTHR42753">
    <property type="entry name" value="MITOCHONDRIAL RIBOSOME PROTEIN L39/PROLYL-TRNA LIGASE FAMILY MEMBER"/>
    <property type="match status" value="1"/>
</dbReference>
<dbReference type="PANTHER" id="PTHR42753:SF2">
    <property type="entry name" value="PROLINE--TRNA LIGASE"/>
    <property type="match status" value="1"/>
</dbReference>
<dbReference type="Pfam" id="PF03129">
    <property type="entry name" value="HGTP_anticodon"/>
    <property type="match status" value="1"/>
</dbReference>
<dbReference type="Pfam" id="PF00587">
    <property type="entry name" value="tRNA-synt_2b"/>
    <property type="match status" value="1"/>
</dbReference>
<dbReference type="Pfam" id="PF04073">
    <property type="entry name" value="tRNA_edit"/>
    <property type="match status" value="1"/>
</dbReference>
<dbReference type="PRINTS" id="PR01046">
    <property type="entry name" value="TRNASYNTHPRO"/>
</dbReference>
<dbReference type="SUPFAM" id="SSF52954">
    <property type="entry name" value="Class II aaRS ABD-related"/>
    <property type="match status" value="1"/>
</dbReference>
<dbReference type="SUPFAM" id="SSF55681">
    <property type="entry name" value="Class II aaRS and biotin synthetases"/>
    <property type="match status" value="1"/>
</dbReference>
<dbReference type="SUPFAM" id="SSF55826">
    <property type="entry name" value="YbaK/ProRS associated domain"/>
    <property type="match status" value="1"/>
</dbReference>
<dbReference type="PROSITE" id="PS50862">
    <property type="entry name" value="AA_TRNA_LIGASE_II"/>
    <property type="match status" value="1"/>
</dbReference>